<dbReference type="EMBL" id="CP000950">
    <property type="protein sequence ID" value="ACA67845.1"/>
    <property type="molecule type" value="Genomic_DNA"/>
</dbReference>
<dbReference type="KEGG" id="ypy:YPK_1552"/>
<dbReference type="PATRIC" id="fig|502800.11.peg.2194"/>
<dbReference type="GO" id="GO:0005886">
    <property type="term" value="C:plasma membrane"/>
    <property type="evidence" value="ECO:0007669"/>
    <property type="project" value="UniProtKB-SubCell"/>
</dbReference>
<dbReference type="HAMAP" id="MF_01101">
    <property type="entry name" value="UPF0208"/>
    <property type="match status" value="1"/>
</dbReference>
<dbReference type="InterPro" id="IPR007334">
    <property type="entry name" value="UPF0208"/>
</dbReference>
<dbReference type="NCBIfam" id="NF002493">
    <property type="entry name" value="PRK01816.1"/>
    <property type="match status" value="1"/>
</dbReference>
<dbReference type="Pfam" id="PF04217">
    <property type="entry name" value="DUF412"/>
    <property type="match status" value="1"/>
</dbReference>
<evidence type="ECO:0000255" key="1">
    <source>
        <dbReference type="HAMAP-Rule" id="MF_01101"/>
    </source>
</evidence>
<sequence length="151" mass="17062">MTIKPSDSVSWFQVLQRGQHYMKTWPADKRLAPVFPENRVTVVTRFGIRFMPPLAIFTLTWQIALGGQLGPAIATALFACGLPLQGLWWLGKRAITPLPPTLLQWFHEVRHKLSEAGQAVAPIEPIPTYQSLADLLKRAFKQLDKTFLDDL</sequence>
<feature type="chain" id="PRO_1000137007" description="UPF0208 membrane protein YPK_1552">
    <location>
        <begin position="1"/>
        <end position="151"/>
    </location>
</feature>
<feature type="transmembrane region" description="Helical" evidence="1">
    <location>
        <begin position="46"/>
        <end position="66"/>
    </location>
</feature>
<feature type="transmembrane region" description="Helical" evidence="1">
    <location>
        <begin position="69"/>
        <end position="89"/>
    </location>
</feature>
<organism>
    <name type="scientific">Yersinia pseudotuberculosis serotype O:3 (strain YPIII)</name>
    <dbReference type="NCBI Taxonomy" id="502800"/>
    <lineage>
        <taxon>Bacteria</taxon>
        <taxon>Pseudomonadati</taxon>
        <taxon>Pseudomonadota</taxon>
        <taxon>Gammaproteobacteria</taxon>
        <taxon>Enterobacterales</taxon>
        <taxon>Yersiniaceae</taxon>
        <taxon>Yersinia</taxon>
    </lineage>
</organism>
<accession>B1JGK5</accession>
<gene>
    <name type="ordered locus">YPK_1552</name>
</gene>
<keyword id="KW-0997">Cell inner membrane</keyword>
<keyword id="KW-1003">Cell membrane</keyword>
<keyword id="KW-0472">Membrane</keyword>
<keyword id="KW-0812">Transmembrane</keyword>
<keyword id="KW-1133">Transmembrane helix</keyword>
<name>Y1552_YERPY</name>
<comment type="subcellular location">
    <subcellularLocation>
        <location evidence="1">Cell inner membrane</location>
        <topology evidence="1">Multi-pass membrane protein</topology>
    </subcellularLocation>
</comment>
<comment type="similarity">
    <text evidence="1">Belongs to the UPF0208 family.</text>
</comment>
<reference key="1">
    <citation type="submission" date="2008-02" db="EMBL/GenBank/DDBJ databases">
        <title>Complete sequence of Yersinia pseudotuberculosis YPIII.</title>
        <authorList>
            <consortium name="US DOE Joint Genome Institute"/>
            <person name="Copeland A."/>
            <person name="Lucas S."/>
            <person name="Lapidus A."/>
            <person name="Glavina del Rio T."/>
            <person name="Dalin E."/>
            <person name="Tice H."/>
            <person name="Bruce D."/>
            <person name="Goodwin L."/>
            <person name="Pitluck S."/>
            <person name="Munk A.C."/>
            <person name="Brettin T."/>
            <person name="Detter J.C."/>
            <person name="Han C."/>
            <person name="Tapia R."/>
            <person name="Schmutz J."/>
            <person name="Larimer F."/>
            <person name="Land M."/>
            <person name="Hauser L."/>
            <person name="Challacombe J.F."/>
            <person name="Green L."/>
            <person name="Lindler L.E."/>
            <person name="Nikolich M.P."/>
            <person name="Richardson P."/>
        </authorList>
    </citation>
    <scope>NUCLEOTIDE SEQUENCE [LARGE SCALE GENOMIC DNA]</scope>
    <source>
        <strain>YPIII</strain>
    </source>
</reference>
<protein>
    <recommendedName>
        <fullName evidence="1">UPF0208 membrane protein YPK_1552</fullName>
    </recommendedName>
</protein>
<proteinExistence type="inferred from homology"/>